<protein>
    <recommendedName>
        <fullName evidence="1">HTH-type transcriptional repressor FabR</fullName>
    </recommendedName>
</protein>
<gene>
    <name evidence="1" type="primary">fabR</name>
    <name type="ordered locus">BWG_3631</name>
</gene>
<feature type="chain" id="PRO_1000213792" description="HTH-type transcriptional repressor FabR">
    <location>
        <begin position="1"/>
        <end position="215"/>
    </location>
</feature>
<feature type="domain" description="HTH tetR-type" evidence="1">
    <location>
        <begin position="10"/>
        <end position="70"/>
    </location>
</feature>
<feature type="DNA-binding region" description="H-T-H motif" evidence="1">
    <location>
        <begin position="33"/>
        <end position="52"/>
    </location>
</feature>
<sequence>MGVRAQQKEKTRRSLVEAAFSQLSAERSFASLSLREVAREAVIAPTSFYRHFRDVDELGLTMVDESGLMLRQLMRQARQRIAKGGSVIRTSVSTFMEFIGNNPNAFRLLLRERSGTSAAFRAAVAREIQHFIAELADYLELENHMPRAFTEAQAEAMVTIVFSAGAEALDVGVEQRRQLEERLVLQLRMISKGAYYWYRREQEKTAIIPGNVKDE</sequence>
<evidence type="ECO:0000255" key="1">
    <source>
        <dbReference type="HAMAP-Rule" id="MF_01190"/>
    </source>
</evidence>
<name>FABR_ECOBW</name>
<accession>C5A0R2</accession>
<keyword id="KW-0963">Cytoplasm</keyword>
<keyword id="KW-0238">DNA-binding</keyword>
<keyword id="KW-0275">Fatty acid biosynthesis</keyword>
<keyword id="KW-0276">Fatty acid metabolism</keyword>
<keyword id="KW-0444">Lipid biosynthesis</keyword>
<keyword id="KW-0443">Lipid metabolism</keyword>
<keyword id="KW-0678">Repressor</keyword>
<keyword id="KW-0804">Transcription</keyword>
<keyword id="KW-0805">Transcription regulation</keyword>
<comment type="function">
    <text evidence="1">Represses the transcription of fabB, involved in unsaturated fatty acid (UFA) biosynthesis. By controlling UFA production, FabR directly influences the physical properties of the membrane bilayer.</text>
</comment>
<comment type="subunit">
    <text evidence="1">Homodimer.</text>
</comment>
<comment type="subcellular location">
    <subcellularLocation>
        <location evidence="1">Cytoplasm</location>
    </subcellularLocation>
</comment>
<proteinExistence type="inferred from homology"/>
<organism>
    <name type="scientific">Escherichia coli (strain K12 / MC4100 / BW2952)</name>
    <dbReference type="NCBI Taxonomy" id="595496"/>
    <lineage>
        <taxon>Bacteria</taxon>
        <taxon>Pseudomonadati</taxon>
        <taxon>Pseudomonadota</taxon>
        <taxon>Gammaproteobacteria</taxon>
        <taxon>Enterobacterales</taxon>
        <taxon>Enterobacteriaceae</taxon>
        <taxon>Escherichia</taxon>
    </lineage>
</organism>
<reference key="1">
    <citation type="journal article" date="2009" name="J. Bacteriol.">
        <title>Genomic sequencing reveals regulatory mutations and recombinational events in the widely used MC4100 lineage of Escherichia coli K-12.</title>
        <authorList>
            <person name="Ferenci T."/>
            <person name="Zhou Z."/>
            <person name="Betteridge T."/>
            <person name="Ren Y."/>
            <person name="Liu Y."/>
            <person name="Feng L."/>
            <person name="Reeves P.R."/>
            <person name="Wang L."/>
        </authorList>
    </citation>
    <scope>NUCLEOTIDE SEQUENCE [LARGE SCALE GENOMIC DNA]</scope>
    <source>
        <strain>K12 / MC4100 / BW2952</strain>
    </source>
</reference>
<dbReference type="EMBL" id="CP001396">
    <property type="protein sequence ID" value="ACR62979.1"/>
    <property type="molecule type" value="Genomic_DNA"/>
</dbReference>
<dbReference type="SMR" id="C5A0R2"/>
<dbReference type="KEGG" id="ebw:BWG_3631"/>
<dbReference type="HOGENOM" id="CLU_081861_0_0_6"/>
<dbReference type="GO" id="GO:0005737">
    <property type="term" value="C:cytoplasm"/>
    <property type="evidence" value="ECO:0007669"/>
    <property type="project" value="UniProtKB-SubCell"/>
</dbReference>
<dbReference type="GO" id="GO:0003677">
    <property type="term" value="F:DNA binding"/>
    <property type="evidence" value="ECO:0007669"/>
    <property type="project" value="UniProtKB-KW"/>
</dbReference>
<dbReference type="GO" id="GO:0003700">
    <property type="term" value="F:DNA-binding transcription factor activity"/>
    <property type="evidence" value="ECO:0007669"/>
    <property type="project" value="UniProtKB-UniRule"/>
</dbReference>
<dbReference type="GO" id="GO:0006633">
    <property type="term" value="P:fatty acid biosynthetic process"/>
    <property type="evidence" value="ECO:0007669"/>
    <property type="project" value="UniProtKB-UniRule"/>
</dbReference>
<dbReference type="GO" id="GO:0045717">
    <property type="term" value="P:negative regulation of fatty acid biosynthetic process"/>
    <property type="evidence" value="ECO:0007669"/>
    <property type="project" value="UniProtKB-UniRule"/>
</dbReference>
<dbReference type="FunFam" id="1.10.10.60:FF:000034">
    <property type="entry name" value="HTH-type transcriptional repressor FabR"/>
    <property type="match status" value="1"/>
</dbReference>
<dbReference type="FunFam" id="1.10.357.10:FF:000001">
    <property type="entry name" value="HTH-type transcriptional repressor FabR"/>
    <property type="match status" value="1"/>
</dbReference>
<dbReference type="Gene3D" id="1.10.10.60">
    <property type="entry name" value="Homeodomain-like"/>
    <property type="match status" value="1"/>
</dbReference>
<dbReference type="Gene3D" id="1.10.357.10">
    <property type="entry name" value="Tetracycline Repressor, domain 2"/>
    <property type="match status" value="1"/>
</dbReference>
<dbReference type="HAMAP" id="MF_01190">
    <property type="entry name" value="HTH_type_FabR"/>
    <property type="match status" value="1"/>
</dbReference>
<dbReference type="InterPro" id="IPR054129">
    <property type="entry name" value="DesT_TetR_C"/>
</dbReference>
<dbReference type="InterPro" id="IPR009057">
    <property type="entry name" value="Homeodomain-like_sf"/>
</dbReference>
<dbReference type="InterPro" id="IPR001647">
    <property type="entry name" value="HTH_TetR"/>
</dbReference>
<dbReference type="InterPro" id="IPR050692">
    <property type="entry name" value="HTH_transcr_repressor_FabR"/>
</dbReference>
<dbReference type="InterPro" id="IPR023764">
    <property type="entry name" value="Tscrpt_reg_HTH_FabR"/>
</dbReference>
<dbReference type="NCBIfam" id="NF008402">
    <property type="entry name" value="PRK11202.1"/>
    <property type="match status" value="1"/>
</dbReference>
<dbReference type="PANTHER" id="PTHR47752">
    <property type="entry name" value="HTH-TYPE TRANSCRIPTIONAL REPRESSOR FABR"/>
    <property type="match status" value="1"/>
</dbReference>
<dbReference type="PANTHER" id="PTHR47752:SF1">
    <property type="entry name" value="HTH-TYPE TRANSCRIPTIONAL REPRESSOR FABR"/>
    <property type="match status" value="1"/>
</dbReference>
<dbReference type="Pfam" id="PF21943">
    <property type="entry name" value="TetR_C_46"/>
    <property type="match status" value="1"/>
</dbReference>
<dbReference type="Pfam" id="PF00440">
    <property type="entry name" value="TetR_N"/>
    <property type="match status" value="1"/>
</dbReference>
<dbReference type="SUPFAM" id="SSF46689">
    <property type="entry name" value="Homeodomain-like"/>
    <property type="match status" value="1"/>
</dbReference>
<dbReference type="PROSITE" id="PS50977">
    <property type="entry name" value="HTH_TETR_2"/>
    <property type="match status" value="1"/>
</dbReference>